<protein>
    <recommendedName>
        <fullName evidence="1">ADP-L-glycero-D-manno-heptose-6-epimerase</fullName>
        <ecNumber evidence="1">5.1.3.20</ecNumber>
    </recommendedName>
    <alternativeName>
        <fullName evidence="1">ADP-L-glycero-beta-D-manno-heptose-6-epimerase</fullName>
        <shortName evidence="1">ADP-glyceromanno-heptose 6-epimerase</shortName>
        <shortName evidence="1">ADP-hep 6-epimerase</shortName>
        <shortName evidence="1">AGME</shortName>
    </alternativeName>
</protein>
<comment type="function">
    <text evidence="1">Catalyzes the interconversion between ADP-D-glycero-beta-D-manno-heptose and ADP-L-glycero-beta-D-manno-heptose via an epimerization at carbon 6 of the heptose.</text>
</comment>
<comment type="catalytic activity">
    <reaction evidence="1">
        <text>ADP-D-glycero-beta-D-manno-heptose = ADP-L-glycero-beta-D-manno-heptose</text>
        <dbReference type="Rhea" id="RHEA:17577"/>
        <dbReference type="ChEBI" id="CHEBI:59967"/>
        <dbReference type="ChEBI" id="CHEBI:61506"/>
        <dbReference type="EC" id="5.1.3.20"/>
    </reaction>
</comment>
<comment type="cofactor">
    <cofactor evidence="1">
        <name>NADP(+)</name>
        <dbReference type="ChEBI" id="CHEBI:58349"/>
    </cofactor>
    <text evidence="1">Binds 1 NADP(+) per subunit.</text>
</comment>
<comment type="pathway">
    <text evidence="1">Nucleotide-sugar biosynthesis; ADP-L-glycero-beta-D-manno-heptose biosynthesis; ADP-L-glycero-beta-D-manno-heptose from D-glycero-beta-D-manno-heptose 7-phosphate: step 4/4.</text>
</comment>
<comment type="subunit">
    <text evidence="1">Homopentamer.</text>
</comment>
<comment type="domain">
    <text evidence="1">Contains a large N-terminal NADP-binding domain, and a smaller C-terminal substrate-binding domain.</text>
</comment>
<comment type="similarity">
    <text evidence="1">Belongs to the NAD(P)-dependent epimerase/dehydratase family. HldD subfamily.</text>
</comment>
<reference key="1">
    <citation type="submission" date="2006-08" db="EMBL/GenBank/DDBJ databases">
        <title>Complete sequence of Alkalilimnicola ehrilichei MLHE-1.</title>
        <authorList>
            <person name="Copeland A."/>
            <person name="Lucas S."/>
            <person name="Lapidus A."/>
            <person name="Barry K."/>
            <person name="Detter J.C."/>
            <person name="Glavina del Rio T."/>
            <person name="Hammon N."/>
            <person name="Israni S."/>
            <person name="Dalin E."/>
            <person name="Tice H."/>
            <person name="Pitluck S."/>
            <person name="Sims D."/>
            <person name="Brettin T."/>
            <person name="Bruce D."/>
            <person name="Han C."/>
            <person name="Tapia R."/>
            <person name="Gilna P."/>
            <person name="Schmutz J."/>
            <person name="Larimer F."/>
            <person name="Land M."/>
            <person name="Hauser L."/>
            <person name="Kyrpides N."/>
            <person name="Mikhailova N."/>
            <person name="Oremland R.S."/>
            <person name="Hoeft S.E."/>
            <person name="Switzer-Blum J."/>
            <person name="Kulp T."/>
            <person name="King G."/>
            <person name="Tabita R."/>
            <person name="Witte B."/>
            <person name="Santini J.M."/>
            <person name="Basu P."/>
            <person name="Hollibaugh J.T."/>
            <person name="Xie G."/>
            <person name="Stolz J.F."/>
            <person name="Richardson P."/>
        </authorList>
    </citation>
    <scope>NUCLEOTIDE SEQUENCE [LARGE SCALE GENOMIC DNA]</scope>
    <source>
        <strain>ATCC BAA-1101 / DSM 17681 / MLHE-1</strain>
    </source>
</reference>
<accession>Q0A4T8</accession>
<evidence type="ECO:0000255" key="1">
    <source>
        <dbReference type="HAMAP-Rule" id="MF_01601"/>
    </source>
</evidence>
<organism>
    <name type="scientific">Alkalilimnicola ehrlichii (strain ATCC BAA-1101 / DSM 17681 / MLHE-1)</name>
    <dbReference type="NCBI Taxonomy" id="187272"/>
    <lineage>
        <taxon>Bacteria</taxon>
        <taxon>Pseudomonadati</taxon>
        <taxon>Pseudomonadota</taxon>
        <taxon>Gammaproteobacteria</taxon>
        <taxon>Chromatiales</taxon>
        <taxon>Ectothiorhodospiraceae</taxon>
        <taxon>Alkalilimnicola</taxon>
    </lineage>
</organism>
<name>HLDD_ALKEH</name>
<keyword id="KW-0119">Carbohydrate metabolism</keyword>
<keyword id="KW-0413">Isomerase</keyword>
<keyword id="KW-0521">NADP</keyword>
<keyword id="KW-1185">Reference proteome</keyword>
<proteinExistence type="inferred from homology"/>
<sequence>MIIVTGGAGFIGSNLVHELNRRGRTDVIVVDNLTRGEKALNLADCVIADYYDKDDFITLIEADEGLGPVEAVFHLGACSATTEWDGRYMMRNNFEYSRALFHWCQDRRIPFIYASSAAVYGGNSVFTEHPEHERPLNVYGYSKLAFDQYLRRYLDDLSAQVVGLRYFNVYGPREQHKGGMASVVHHFSRQLRESGQVRLFEGSDGYADGEQRRDFVDVSDCVRLKLWLLDHPEVSGIYNCGTGRARTFNAMAHAVIDWFGHGEIEYIPFPEHLKGRYQSYTQADLSQLRAAGCDLAFNDIETGVRNYLDAVADAPAVMPS</sequence>
<gene>
    <name evidence="1" type="primary">hldD</name>
    <name type="ordered locus">Mlg_2809</name>
</gene>
<dbReference type="EC" id="5.1.3.20" evidence="1"/>
<dbReference type="EMBL" id="CP000453">
    <property type="protein sequence ID" value="ABI58149.1"/>
    <property type="molecule type" value="Genomic_DNA"/>
</dbReference>
<dbReference type="RefSeq" id="WP_011630542.1">
    <property type="nucleotide sequence ID" value="NC_008340.1"/>
</dbReference>
<dbReference type="SMR" id="Q0A4T8"/>
<dbReference type="KEGG" id="aeh:Mlg_2809"/>
<dbReference type="eggNOG" id="COG0451">
    <property type="taxonomic scope" value="Bacteria"/>
</dbReference>
<dbReference type="HOGENOM" id="CLU_007383_1_3_6"/>
<dbReference type="OrthoDB" id="9803010at2"/>
<dbReference type="UniPathway" id="UPA00356">
    <property type="reaction ID" value="UER00440"/>
</dbReference>
<dbReference type="Proteomes" id="UP000001962">
    <property type="component" value="Chromosome"/>
</dbReference>
<dbReference type="GO" id="GO:0008712">
    <property type="term" value="F:ADP-glyceromanno-heptose 6-epimerase activity"/>
    <property type="evidence" value="ECO:0007669"/>
    <property type="project" value="UniProtKB-UniRule"/>
</dbReference>
<dbReference type="GO" id="GO:0050661">
    <property type="term" value="F:NADP binding"/>
    <property type="evidence" value="ECO:0007669"/>
    <property type="project" value="InterPro"/>
</dbReference>
<dbReference type="GO" id="GO:0097171">
    <property type="term" value="P:ADP-L-glycero-beta-D-manno-heptose biosynthetic process"/>
    <property type="evidence" value="ECO:0007669"/>
    <property type="project" value="UniProtKB-UniPathway"/>
</dbReference>
<dbReference type="GO" id="GO:0005975">
    <property type="term" value="P:carbohydrate metabolic process"/>
    <property type="evidence" value="ECO:0007669"/>
    <property type="project" value="UniProtKB-UniRule"/>
</dbReference>
<dbReference type="CDD" id="cd05248">
    <property type="entry name" value="ADP_GME_SDR_e"/>
    <property type="match status" value="1"/>
</dbReference>
<dbReference type="Gene3D" id="3.40.50.720">
    <property type="entry name" value="NAD(P)-binding Rossmann-like Domain"/>
    <property type="match status" value="1"/>
</dbReference>
<dbReference type="Gene3D" id="3.90.25.10">
    <property type="entry name" value="UDP-galactose 4-epimerase, domain 1"/>
    <property type="match status" value="1"/>
</dbReference>
<dbReference type="HAMAP" id="MF_01601">
    <property type="entry name" value="Heptose_epimerase"/>
    <property type="match status" value="1"/>
</dbReference>
<dbReference type="InterPro" id="IPR001509">
    <property type="entry name" value="Epimerase_deHydtase"/>
</dbReference>
<dbReference type="InterPro" id="IPR011912">
    <property type="entry name" value="Heptose_epim"/>
</dbReference>
<dbReference type="InterPro" id="IPR036291">
    <property type="entry name" value="NAD(P)-bd_dom_sf"/>
</dbReference>
<dbReference type="NCBIfam" id="TIGR02197">
    <property type="entry name" value="heptose_epim"/>
    <property type="match status" value="1"/>
</dbReference>
<dbReference type="PANTHER" id="PTHR43103:SF3">
    <property type="entry name" value="ADP-L-GLYCERO-D-MANNO-HEPTOSE-6-EPIMERASE"/>
    <property type="match status" value="1"/>
</dbReference>
<dbReference type="PANTHER" id="PTHR43103">
    <property type="entry name" value="NUCLEOSIDE-DIPHOSPHATE-SUGAR EPIMERASE"/>
    <property type="match status" value="1"/>
</dbReference>
<dbReference type="Pfam" id="PF01370">
    <property type="entry name" value="Epimerase"/>
    <property type="match status" value="1"/>
</dbReference>
<dbReference type="SUPFAM" id="SSF51735">
    <property type="entry name" value="NAD(P)-binding Rossmann-fold domains"/>
    <property type="match status" value="1"/>
</dbReference>
<feature type="chain" id="PRO_1000069341" description="ADP-L-glycero-D-manno-heptose-6-epimerase">
    <location>
        <begin position="1"/>
        <end position="320"/>
    </location>
</feature>
<feature type="active site" description="Proton acceptor" evidence="1">
    <location>
        <position position="139"/>
    </location>
</feature>
<feature type="active site" description="Proton acceptor" evidence="1">
    <location>
        <position position="177"/>
    </location>
</feature>
<feature type="binding site" evidence="1">
    <location>
        <begin position="10"/>
        <end position="11"/>
    </location>
    <ligand>
        <name>NADP(+)</name>
        <dbReference type="ChEBI" id="CHEBI:58349"/>
    </ligand>
</feature>
<feature type="binding site" evidence="1">
    <location>
        <begin position="31"/>
        <end position="32"/>
    </location>
    <ligand>
        <name>NADP(+)</name>
        <dbReference type="ChEBI" id="CHEBI:58349"/>
    </ligand>
</feature>
<feature type="binding site" evidence="1">
    <location>
        <position position="38"/>
    </location>
    <ligand>
        <name>NADP(+)</name>
        <dbReference type="ChEBI" id="CHEBI:58349"/>
    </ligand>
</feature>
<feature type="binding site" evidence="1">
    <location>
        <position position="53"/>
    </location>
    <ligand>
        <name>NADP(+)</name>
        <dbReference type="ChEBI" id="CHEBI:58349"/>
    </ligand>
</feature>
<feature type="binding site" evidence="1">
    <location>
        <begin position="75"/>
        <end position="79"/>
    </location>
    <ligand>
        <name>NADP(+)</name>
        <dbReference type="ChEBI" id="CHEBI:58349"/>
    </ligand>
</feature>
<feature type="binding site" evidence="1">
    <location>
        <position position="92"/>
    </location>
    <ligand>
        <name>NADP(+)</name>
        <dbReference type="ChEBI" id="CHEBI:58349"/>
    </ligand>
</feature>
<feature type="binding site" evidence="1">
    <location>
        <position position="143"/>
    </location>
    <ligand>
        <name>NADP(+)</name>
        <dbReference type="ChEBI" id="CHEBI:58349"/>
    </ligand>
</feature>
<feature type="binding site" evidence="1">
    <location>
        <position position="168"/>
    </location>
    <ligand>
        <name>substrate</name>
    </ligand>
</feature>
<feature type="binding site" evidence="1">
    <location>
        <position position="169"/>
    </location>
    <ligand>
        <name>NADP(+)</name>
        <dbReference type="ChEBI" id="CHEBI:58349"/>
    </ligand>
</feature>
<feature type="binding site" evidence="1">
    <location>
        <position position="177"/>
    </location>
    <ligand>
        <name>NADP(+)</name>
        <dbReference type="ChEBI" id="CHEBI:58349"/>
    </ligand>
</feature>
<feature type="binding site" evidence="1">
    <location>
        <position position="179"/>
    </location>
    <ligand>
        <name>substrate</name>
    </ligand>
</feature>
<feature type="binding site" evidence="1">
    <location>
        <position position="186"/>
    </location>
    <ligand>
        <name>substrate</name>
    </ligand>
</feature>
<feature type="binding site" evidence="1">
    <location>
        <begin position="200"/>
        <end position="203"/>
    </location>
    <ligand>
        <name>substrate</name>
    </ligand>
</feature>
<feature type="binding site" evidence="1">
    <location>
        <position position="213"/>
    </location>
    <ligand>
        <name>substrate</name>
    </ligand>
</feature>
<feature type="binding site" evidence="1">
    <location>
        <position position="277"/>
    </location>
    <ligand>
        <name>substrate</name>
    </ligand>
</feature>